<reference key="1">
    <citation type="journal article" date="2008" name="J. Bacteriol.">
        <title>Genome sequence of the fish pathogen Renibacterium salmoninarum suggests reductive evolution away from an environmental Arthrobacter ancestor.</title>
        <authorList>
            <person name="Wiens G.D."/>
            <person name="Rockey D.D."/>
            <person name="Wu Z."/>
            <person name="Chang J."/>
            <person name="Levy R."/>
            <person name="Crane S."/>
            <person name="Chen D.S."/>
            <person name="Capri G.R."/>
            <person name="Burnett J.R."/>
            <person name="Sudheesh P.S."/>
            <person name="Schipma M.J."/>
            <person name="Burd H."/>
            <person name="Bhattacharyya A."/>
            <person name="Rhodes L.D."/>
            <person name="Kaul R."/>
            <person name="Strom M.S."/>
        </authorList>
    </citation>
    <scope>NUCLEOTIDE SEQUENCE [LARGE SCALE GENOMIC DNA]</scope>
    <source>
        <strain>ATCC 33209 / DSM 20767 / JCM 11484 / NBRC 15589 / NCIMB 2235</strain>
    </source>
</reference>
<organism>
    <name type="scientific">Renibacterium salmoninarum (strain ATCC 33209 / DSM 20767 / JCM 11484 / NBRC 15589 / NCIMB 2235)</name>
    <dbReference type="NCBI Taxonomy" id="288705"/>
    <lineage>
        <taxon>Bacteria</taxon>
        <taxon>Bacillati</taxon>
        <taxon>Actinomycetota</taxon>
        <taxon>Actinomycetes</taxon>
        <taxon>Micrococcales</taxon>
        <taxon>Micrococcaceae</taxon>
        <taxon>Renibacterium</taxon>
    </lineage>
</organism>
<name>RS11_RENSM</name>
<evidence type="ECO:0000255" key="1">
    <source>
        <dbReference type="HAMAP-Rule" id="MF_01310"/>
    </source>
</evidence>
<evidence type="ECO:0000256" key="2">
    <source>
        <dbReference type="SAM" id="MobiDB-lite"/>
    </source>
</evidence>
<evidence type="ECO:0000305" key="3"/>
<proteinExistence type="inferred from homology"/>
<feature type="chain" id="PRO_1000086203" description="Small ribosomal subunit protein uS11">
    <location>
        <begin position="1"/>
        <end position="133"/>
    </location>
</feature>
<feature type="region of interest" description="Disordered" evidence="2">
    <location>
        <begin position="1"/>
        <end position="22"/>
    </location>
</feature>
<feature type="compositionally biased region" description="Basic residues" evidence="2">
    <location>
        <begin position="7"/>
        <end position="17"/>
    </location>
</feature>
<gene>
    <name evidence="1" type="primary">rpsK</name>
    <name type="ordered locus">RSal33209_2118</name>
</gene>
<keyword id="KW-1185">Reference proteome</keyword>
<keyword id="KW-0687">Ribonucleoprotein</keyword>
<keyword id="KW-0689">Ribosomal protein</keyword>
<keyword id="KW-0694">RNA-binding</keyword>
<keyword id="KW-0699">rRNA-binding</keyword>
<dbReference type="EMBL" id="CP000910">
    <property type="protein sequence ID" value="ABY23850.1"/>
    <property type="molecule type" value="Genomic_DNA"/>
</dbReference>
<dbReference type="SMR" id="A9WSR2"/>
<dbReference type="STRING" id="288705.RSal33209_2118"/>
<dbReference type="KEGG" id="rsa:RSal33209_2118"/>
<dbReference type="eggNOG" id="COG0100">
    <property type="taxonomic scope" value="Bacteria"/>
</dbReference>
<dbReference type="HOGENOM" id="CLU_072439_5_0_11"/>
<dbReference type="Proteomes" id="UP000002007">
    <property type="component" value="Chromosome"/>
</dbReference>
<dbReference type="GO" id="GO:1990904">
    <property type="term" value="C:ribonucleoprotein complex"/>
    <property type="evidence" value="ECO:0007669"/>
    <property type="project" value="UniProtKB-KW"/>
</dbReference>
<dbReference type="GO" id="GO:0005840">
    <property type="term" value="C:ribosome"/>
    <property type="evidence" value="ECO:0007669"/>
    <property type="project" value="UniProtKB-KW"/>
</dbReference>
<dbReference type="GO" id="GO:0019843">
    <property type="term" value="F:rRNA binding"/>
    <property type="evidence" value="ECO:0007669"/>
    <property type="project" value="UniProtKB-UniRule"/>
</dbReference>
<dbReference type="GO" id="GO:0003735">
    <property type="term" value="F:structural constituent of ribosome"/>
    <property type="evidence" value="ECO:0007669"/>
    <property type="project" value="InterPro"/>
</dbReference>
<dbReference type="GO" id="GO:0006412">
    <property type="term" value="P:translation"/>
    <property type="evidence" value="ECO:0007669"/>
    <property type="project" value="UniProtKB-UniRule"/>
</dbReference>
<dbReference type="FunFam" id="3.30.420.80:FF:000001">
    <property type="entry name" value="30S ribosomal protein S11"/>
    <property type="match status" value="1"/>
</dbReference>
<dbReference type="Gene3D" id="3.30.420.80">
    <property type="entry name" value="Ribosomal protein S11"/>
    <property type="match status" value="1"/>
</dbReference>
<dbReference type="HAMAP" id="MF_01310">
    <property type="entry name" value="Ribosomal_uS11"/>
    <property type="match status" value="1"/>
</dbReference>
<dbReference type="InterPro" id="IPR001971">
    <property type="entry name" value="Ribosomal_uS11"/>
</dbReference>
<dbReference type="InterPro" id="IPR019981">
    <property type="entry name" value="Ribosomal_uS11_bac-type"/>
</dbReference>
<dbReference type="InterPro" id="IPR018102">
    <property type="entry name" value="Ribosomal_uS11_CS"/>
</dbReference>
<dbReference type="InterPro" id="IPR036967">
    <property type="entry name" value="Ribosomal_uS11_sf"/>
</dbReference>
<dbReference type="NCBIfam" id="NF003698">
    <property type="entry name" value="PRK05309.1"/>
    <property type="match status" value="1"/>
</dbReference>
<dbReference type="NCBIfam" id="TIGR03632">
    <property type="entry name" value="uS11_bact"/>
    <property type="match status" value="1"/>
</dbReference>
<dbReference type="PANTHER" id="PTHR11759">
    <property type="entry name" value="40S RIBOSOMAL PROTEIN S14/30S RIBOSOMAL PROTEIN S11"/>
    <property type="match status" value="1"/>
</dbReference>
<dbReference type="Pfam" id="PF00411">
    <property type="entry name" value="Ribosomal_S11"/>
    <property type="match status" value="1"/>
</dbReference>
<dbReference type="PIRSF" id="PIRSF002131">
    <property type="entry name" value="Ribosomal_S11"/>
    <property type="match status" value="1"/>
</dbReference>
<dbReference type="SUPFAM" id="SSF53137">
    <property type="entry name" value="Translational machinery components"/>
    <property type="match status" value="1"/>
</dbReference>
<dbReference type="PROSITE" id="PS00054">
    <property type="entry name" value="RIBOSOMAL_S11"/>
    <property type="match status" value="1"/>
</dbReference>
<accession>A9WSR2</accession>
<comment type="function">
    <text evidence="1">Located on the platform of the 30S subunit, it bridges several disparate RNA helices of the 16S rRNA. Forms part of the Shine-Dalgarno cleft in the 70S ribosome.</text>
</comment>
<comment type="subunit">
    <text evidence="1">Part of the 30S ribosomal subunit. Interacts with proteins S7 and S18. Binds to IF-3.</text>
</comment>
<comment type="similarity">
    <text evidence="1">Belongs to the universal ribosomal protein uS11 family.</text>
</comment>
<protein>
    <recommendedName>
        <fullName evidence="1">Small ribosomal subunit protein uS11</fullName>
    </recommendedName>
    <alternativeName>
        <fullName evidence="3">30S ribosomal protein S11</fullName>
    </alternativeName>
</protein>
<sequence length="133" mass="14106">MPPKTRGAVRKPRKKDKKNIALGQAHIKSTFNNTIVTITDPAGAVIAWASSGEVGFKGSRKSTPFAAQLAAEQAAKRAQEHGVRKVDVFVKGPGSGRETAIRSLTAAGLEVGSIQDVTPSAHNGCRPPKRRRV</sequence>